<keyword id="KW-1015">Disulfide bond</keyword>
<keyword id="KW-0256">Endoplasmic reticulum</keyword>
<keyword id="KW-0325">Glycoprotein</keyword>
<keyword id="KW-0413">Isomerase</keyword>
<keyword id="KW-0472">Membrane</keyword>
<keyword id="KW-0676">Redox-active center</keyword>
<keyword id="KW-1185">Reference proteome</keyword>
<keyword id="KW-0732">Signal</keyword>
<keyword id="KW-0812">Transmembrane</keyword>
<keyword id="KW-1133">Transmembrane helix</keyword>
<feature type="signal peptide" evidence="4">
    <location>
        <begin position="1"/>
        <end position="21"/>
    </location>
</feature>
<feature type="chain" id="PRO_5035034256" description="Protein disulfide-isomerase tmx3a" evidence="4">
    <location>
        <begin position="22"/>
        <end position="437"/>
    </location>
</feature>
<feature type="topological domain" description="Extracellular" evidence="10">
    <location>
        <begin position="22"/>
        <end position="368"/>
    </location>
</feature>
<feature type="transmembrane region" description="Helical" evidence="4">
    <location>
        <begin position="369"/>
        <end position="389"/>
    </location>
</feature>
<feature type="topological domain" description="Cytoplasmic" evidence="10">
    <location>
        <begin position="390"/>
        <end position="437"/>
    </location>
</feature>
<feature type="domain" description="Thioredoxin" evidence="6">
    <location>
        <begin position="22"/>
        <end position="126"/>
    </location>
</feature>
<feature type="region of interest" description="Disordered" evidence="7">
    <location>
        <begin position="398"/>
        <end position="437"/>
    </location>
</feature>
<feature type="short sequence motif" description="Di-lysine motif" evidence="4">
    <location>
        <begin position="434"/>
        <end position="437"/>
    </location>
</feature>
<feature type="compositionally biased region" description="Basic and acidic residues" evidence="7">
    <location>
        <begin position="414"/>
        <end position="437"/>
    </location>
</feature>
<feature type="active site" description="Nucleophile" evidence="2">
    <location>
        <position position="48"/>
    </location>
</feature>
<feature type="active site" description="Nucleophile" evidence="2">
    <location>
        <position position="51"/>
    </location>
</feature>
<feature type="glycosylation site" description="N-linked (GlcNAc...) asparagine" evidence="5">
    <location>
        <position position="308"/>
    </location>
</feature>
<feature type="disulfide bond" description="Redox-active" evidence="6">
    <location>
        <begin position="48"/>
        <end position="51"/>
    </location>
</feature>
<accession>A0A8M1N5Y4</accession>
<accession>Q503X6</accession>
<reference key="1">
    <citation type="journal article" date="2013" name="Nature">
        <title>The zebrafish reference genome sequence and its relationship to the human genome.</title>
        <authorList>
            <person name="Howe K."/>
            <person name="Clark M.D."/>
            <person name="Torroja C.F."/>
            <person name="Torrance J."/>
            <person name="Berthelot C."/>
            <person name="Muffato M."/>
            <person name="Collins J.E."/>
            <person name="Humphray S."/>
            <person name="McLaren K."/>
            <person name="Matthews L."/>
            <person name="McLaren S."/>
            <person name="Sealy I."/>
            <person name="Caccamo M."/>
            <person name="Churcher C."/>
            <person name="Scott C."/>
            <person name="Barrett J.C."/>
            <person name="Koch R."/>
            <person name="Rauch G.J."/>
            <person name="White S."/>
            <person name="Chow W."/>
            <person name="Kilian B."/>
            <person name="Quintais L.T."/>
            <person name="Guerra-Assuncao J.A."/>
            <person name="Zhou Y."/>
            <person name="Gu Y."/>
            <person name="Yen J."/>
            <person name="Vogel J.H."/>
            <person name="Eyre T."/>
            <person name="Redmond S."/>
            <person name="Banerjee R."/>
            <person name="Chi J."/>
            <person name="Fu B."/>
            <person name="Langley E."/>
            <person name="Maguire S.F."/>
            <person name="Laird G.K."/>
            <person name="Lloyd D."/>
            <person name="Kenyon E."/>
            <person name="Donaldson S."/>
            <person name="Sehra H."/>
            <person name="Almeida-King J."/>
            <person name="Loveland J."/>
            <person name="Trevanion S."/>
            <person name="Jones M."/>
            <person name="Quail M."/>
            <person name="Willey D."/>
            <person name="Hunt A."/>
            <person name="Burton J."/>
            <person name="Sims S."/>
            <person name="McLay K."/>
            <person name="Plumb B."/>
            <person name="Davis J."/>
            <person name="Clee C."/>
            <person name="Oliver K."/>
            <person name="Clark R."/>
            <person name="Riddle C."/>
            <person name="Elliot D."/>
            <person name="Threadgold G."/>
            <person name="Harden G."/>
            <person name="Ware D."/>
            <person name="Begum S."/>
            <person name="Mortimore B."/>
            <person name="Kerry G."/>
            <person name="Heath P."/>
            <person name="Phillimore B."/>
            <person name="Tracey A."/>
            <person name="Corby N."/>
            <person name="Dunn M."/>
            <person name="Johnson C."/>
            <person name="Wood J."/>
            <person name="Clark S."/>
            <person name="Pelan S."/>
            <person name="Griffiths G."/>
            <person name="Smith M."/>
            <person name="Glithero R."/>
            <person name="Howden P."/>
            <person name="Barker N."/>
            <person name="Lloyd C."/>
            <person name="Stevens C."/>
            <person name="Harley J."/>
            <person name="Holt K."/>
            <person name="Panagiotidis G."/>
            <person name="Lovell J."/>
            <person name="Beasley H."/>
            <person name="Henderson C."/>
            <person name="Gordon D."/>
            <person name="Auger K."/>
            <person name="Wright D."/>
            <person name="Collins J."/>
            <person name="Raisen C."/>
            <person name="Dyer L."/>
            <person name="Leung K."/>
            <person name="Robertson L."/>
            <person name="Ambridge K."/>
            <person name="Leongamornlert D."/>
            <person name="McGuire S."/>
            <person name="Gilderthorp R."/>
            <person name="Griffiths C."/>
            <person name="Manthravadi D."/>
            <person name="Nichol S."/>
            <person name="Barker G."/>
            <person name="Whitehead S."/>
            <person name="Kay M."/>
            <person name="Brown J."/>
            <person name="Murnane C."/>
            <person name="Gray E."/>
            <person name="Humphries M."/>
            <person name="Sycamore N."/>
            <person name="Barker D."/>
            <person name="Saunders D."/>
            <person name="Wallis J."/>
            <person name="Babbage A."/>
            <person name="Hammond S."/>
            <person name="Mashreghi-Mohammadi M."/>
            <person name="Barr L."/>
            <person name="Martin S."/>
            <person name="Wray P."/>
            <person name="Ellington A."/>
            <person name="Matthews N."/>
            <person name="Ellwood M."/>
            <person name="Woodmansey R."/>
            <person name="Clark G."/>
            <person name="Cooper J."/>
            <person name="Tromans A."/>
            <person name="Grafham D."/>
            <person name="Skuce C."/>
            <person name="Pandian R."/>
            <person name="Andrews R."/>
            <person name="Harrison E."/>
            <person name="Kimberley A."/>
            <person name="Garnett J."/>
            <person name="Fosker N."/>
            <person name="Hall R."/>
            <person name="Garner P."/>
            <person name="Kelly D."/>
            <person name="Bird C."/>
            <person name="Palmer S."/>
            <person name="Gehring I."/>
            <person name="Berger A."/>
            <person name="Dooley C.M."/>
            <person name="Ersan-Urun Z."/>
            <person name="Eser C."/>
            <person name="Geiger H."/>
            <person name="Geisler M."/>
            <person name="Karotki L."/>
            <person name="Kirn A."/>
            <person name="Konantz J."/>
            <person name="Konantz M."/>
            <person name="Oberlander M."/>
            <person name="Rudolph-Geiger S."/>
            <person name="Teucke M."/>
            <person name="Lanz C."/>
            <person name="Raddatz G."/>
            <person name="Osoegawa K."/>
            <person name="Zhu B."/>
            <person name="Rapp A."/>
            <person name="Widaa S."/>
            <person name="Langford C."/>
            <person name="Yang F."/>
            <person name="Schuster S.C."/>
            <person name="Carter N.P."/>
            <person name="Harrow J."/>
            <person name="Ning Z."/>
            <person name="Herrero J."/>
            <person name="Searle S.M."/>
            <person name="Enright A."/>
            <person name="Geisler R."/>
            <person name="Plasterk R.H."/>
            <person name="Lee C."/>
            <person name="Westerfield M."/>
            <person name="de Jong P.J."/>
            <person name="Zon L.I."/>
            <person name="Postlethwait J.H."/>
            <person name="Nusslein-Volhard C."/>
            <person name="Hubbard T.J."/>
            <person name="Roest Crollius H."/>
            <person name="Rogers J."/>
            <person name="Stemple D.L."/>
        </authorList>
    </citation>
    <scope>NUCLEOTIDE SEQUENCE [LARGE SCALE GENOMIC DNA]</scope>
    <source>
        <strain>Tuebingen</strain>
    </source>
</reference>
<reference key="2">
    <citation type="submission" date="2005-05" db="EMBL/GenBank/DDBJ databases">
        <authorList>
            <consortium name="NIH - Zebrafish Gene Collection (ZGC) project"/>
        </authorList>
    </citation>
    <scope>NUCLEOTIDE SEQUENCE [LARGE SCALE MRNA]</scope>
    <source>
        <tissue>Eye</tissue>
    </source>
</reference>
<reference key="3">
    <citation type="journal article" date="2010" name="PLoS ONE">
        <title>A male with unilateral microphthalmia reveals a role for TMX3 in eye development.</title>
        <authorList>
            <person name="Chao R."/>
            <person name="Nevin L."/>
            <person name="Agarwal P."/>
            <person name="Riemer J."/>
            <person name="Bai X."/>
            <person name="Delaney A."/>
            <person name="Akana M."/>
            <person name="JimenezLopez N."/>
            <person name="Bardakjian T."/>
            <person name="Schneider A."/>
            <person name="Chassaing N."/>
            <person name="Schorderet D.F."/>
            <person name="FitzPatrick D."/>
            <person name="Kwok P.Y."/>
            <person name="Ellgaard L."/>
            <person name="Gould D.B."/>
            <person name="Zhang Y."/>
            <person name="Malicki J."/>
            <person name="Baier H."/>
            <person name="Slavotinek A."/>
        </authorList>
    </citation>
    <scope>DISRUPTION PHENOTYPE</scope>
</reference>
<gene>
    <name type="primary">tmx3a</name>
    <name evidence="9" type="ORF">zgc:110025</name>
</gene>
<protein>
    <recommendedName>
        <fullName>Protein disulfide-isomerase tmx3a</fullName>
        <ecNumber evidence="1">5.3.4.1</ecNumber>
    </recommendedName>
</protein>
<proteinExistence type="evidence at transcript level"/>
<comment type="function">
    <text evidence="1">Probable disulfide isomerase, which participates in the folding of proteins containing disulfide bonds. May act as a dithiol oxidase. Acts as a regulator of endoplasmic reticulum-mitochondria contact sites via its ability to regulate redox signals (By similarity).</text>
</comment>
<comment type="catalytic activity">
    <reaction evidence="1">
        <text>Catalyzes the rearrangement of -S-S- bonds in proteins.</text>
        <dbReference type="EC" id="5.3.4.1"/>
    </reaction>
</comment>
<comment type="subcellular location">
    <subcellularLocation>
        <location evidence="1">Endoplasmic reticulum membrane</location>
        <topology evidence="1">Single-pass membrane protein</topology>
    </subcellularLocation>
</comment>
<comment type="domain">
    <text evidence="3">The di-lysine motif confers endoplasmic reticulum localization for type I membrane proteins.</text>
</comment>
<comment type="disruption phenotype">
    <text evidence="8">Morpholino knockdown of the protein causes a small eye phenotype.</text>
</comment>
<comment type="sequence caution" evidence="10">
    <conflict type="erroneous initiation">
        <sequence resource="EMBL-CDS" id="AAH95139"/>
    </conflict>
    <text>Truncated N-terminus.</text>
</comment>
<comment type="sequence caution" evidence="10">
    <conflict type="erroneous initiation">
        <sequence resource="EMBL-CDS" id="AAI64528"/>
    </conflict>
    <text>Truncated N-terminus.</text>
</comment>
<name>TMX3A_DANRE</name>
<dbReference type="EC" id="5.3.4.1" evidence="1"/>
<dbReference type="EMBL" id="BC095139">
    <property type="protein sequence ID" value="AAH95139.1"/>
    <property type="status" value="ALT_INIT"/>
    <property type="molecule type" value="mRNA"/>
</dbReference>
<dbReference type="EMBL" id="BC164528">
    <property type="protein sequence ID" value="AAI64528.1"/>
    <property type="status" value="ALT_INIT"/>
    <property type="molecule type" value="mRNA"/>
</dbReference>
<dbReference type="RefSeq" id="NP_001018393.2">
    <property type="nucleotide sequence ID" value="NM_001020557.1"/>
</dbReference>
<dbReference type="SMR" id="A0A8M1N5Y4"/>
<dbReference type="FunCoup" id="A0A8M1N5Y4">
    <property type="interactions" value="1944"/>
</dbReference>
<dbReference type="GeneID" id="553578"/>
<dbReference type="KEGG" id="dre:553578"/>
<dbReference type="AGR" id="ZFIN:ZDB-GENE-050522-396"/>
<dbReference type="CTD" id="553578"/>
<dbReference type="ZFIN" id="ZDB-GENE-050522-396">
    <property type="gene designation" value="tmx3a"/>
</dbReference>
<dbReference type="OrthoDB" id="74910at2759"/>
<dbReference type="PRO" id="PR:A0A8M1N5Y4"/>
<dbReference type="Proteomes" id="UP000000437">
    <property type="component" value="Chromosome 2"/>
</dbReference>
<dbReference type="GO" id="GO:0009986">
    <property type="term" value="C:cell surface"/>
    <property type="evidence" value="ECO:0000318"/>
    <property type="project" value="GO_Central"/>
</dbReference>
<dbReference type="GO" id="GO:0005783">
    <property type="term" value="C:endoplasmic reticulum"/>
    <property type="evidence" value="ECO:0000318"/>
    <property type="project" value="GO_Central"/>
</dbReference>
<dbReference type="GO" id="GO:0005789">
    <property type="term" value="C:endoplasmic reticulum membrane"/>
    <property type="evidence" value="ECO:0007669"/>
    <property type="project" value="UniProtKB-SubCell"/>
</dbReference>
<dbReference type="GO" id="GO:0016853">
    <property type="term" value="F:isomerase activity"/>
    <property type="evidence" value="ECO:0007669"/>
    <property type="project" value="UniProtKB-KW"/>
</dbReference>
<dbReference type="GO" id="GO:0001654">
    <property type="term" value="P:eye development"/>
    <property type="evidence" value="ECO:0000315"/>
    <property type="project" value="ZFIN"/>
</dbReference>
<dbReference type="CDD" id="cd03000">
    <property type="entry name" value="PDI_a_TMX3"/>
    <property type="match status" value="1"/>
</dbReference>
<dbReference type="FunFam" id="3.40.30.10:FF:000121">
    <property type="entry name" value="protein disulfide-isomerase TMX3 isoform X1"/>
    <property type="match status" value="1"/>
</dbReference>
<dbReference type="Gene3D" id="3.40.30.10">
    <property type="entry name" value="Glutaredoxin"/>
    <property type="match status" value="3"/>
</dbReference>
<dbReference type="InterPro" id="IPR052250">
    <property type="entry name" value="PDI_TMX3"/>
</dbReference>
<dbReference type="InterPro" id="IPR036249">
    <property type="entry name" value="Thioredoxin-like_sf"/>
</dbReference>
<dbReference type="InterPro" id="IPR017937">
    <property type="entry name" value="Thioredoxin_CS"/>
</dbReference>
<dbReference type="InterPro" id="IPR013766">
    <property type="entry name" value="Thioredoxin_domain"/>
</dbReference>
<dbReference type="PANTHER" id="PTHR46426">
    <property type="entry name" value="PROTEIN DISULFIDE-ISOMERASE TMX3"/>
    <property type="match status" value="1"/>
</dbReference>
<dbReference type="PANTHER" id="PTHR46426:SF1">
    <property type="entry name" value="PROTEIN DISULFIDE-ISOMERASE TMX3"/>
    <property type="match status" value="1"/>
</dbReference>
<dbReference type="Pfam" id="PF00085">
    <property type="entry name" value="Thioredoxin"/>
    <property type="match status" value="1"/>
</dbReference>
<dbReference type="Pfam" id="PF13848">
    <property type="entry name" value="Thioredoxin_6"/>
    <property type="match status" value="1"/>
</dbReference>
<dbReference type="PRINTS" id="PR00421">
    <property type="entry name" value="THIOREDOXIN"/>
</dbReference>
<dbReference type="SUPFAM" id="SSF52833">
    <property type="entry name" value="Thioredoxin-like"/>
    <property type="match status" value="1"/>
</dbReference>
<dbReference type="PROSITE" id="PS00194">
    <property type="entry name" value="THIOREDOXIN_1"/>
    <property type="match status" value="1"/>
</dbReference>
<dbReference type="PROSITE" id="PS51352">
    <property type="entry name" value="THIOREDOXIN_2"/>
    <property type="match status" value="1"/>
</dbReference>
<organism>
    <name type="scientific">Danio rerio</name>
    <name type="common">Zebrafish</name>
    <name type="synonym">Brachydanio rerio</name>
    <dbReference type="NCBI Taxonomy" id="7955"/>
    <lineage>
        <taxon>Eukaryota</taxon>
        <taxon>Metazoa</taxon>
        <taxon>Chordata</taxon>
        <taxon>Craniata</taxon>
        <taxon>Vertebrata</taxon>
        <taxon>Euteleostomi</taxon>
        <taxon>Actinopterygii</taxon>
        <taxon>Neopterygii</taxon>
        <taxon>Teleostei</taxon>
        <taxon>Ostariophysi</taxon>
        <taxon>Cypriniformes</taxon>
        <taxon>Danionidae</taxon>
        <taxon>Danioninae</taxon>
        <taxon>Danio</taxon>
    </lineage>
</organism>
<sequence length="437" mass="49077">MANMRNIILTALLSAIALVSGYVEGLDDKFTEFRQNELWLVEFYAPWCAYCHTFEPVWTEVGAELKSLGSPVNVGKIDTTAHTSIATEFNIRGYPTIKLFKGDLSFDYKGPRTKDGIIEFTNRVSGPVVRPLSSVQLFQHVMSRHDVIFVYIGGESLLKKEYYKAATEFIVHTYFFTASEEILPKAVTLQDVPAVAVFKDGTYYIYNEFIDGDLSSWINRERFLSYFQIDSYSLYQMGELSKLVALAVVDEKNPSEESIRYKTLMERVSTEYRDHYKSDFQFGYVDGNEYVNGLIMGELAMPSIIVLNMSIDGYYIPESSTETIEDLLQFLNSVLDGSTTLLGGNGFWQCAKRIFYKGKNTVMSMVETAPVFSCFVLGLPVGVVVLVIYATCTAVPADDEKPEEEATASPALDTHGKKAIESQPESTEKTSEAKKED</sequence>
<evidence type="ECO:0000250" key="1">
    <source>
        <dbReference type="UniProtKB" id="Q96JJ7"/>
    </source>
</evidence>
<evidence type="ECO:0000250" key="2">
    <source>
        <dbReference type="UniProtKB" id="Q9H3N1"/>
    </source>
</evidence>
<evidence type="ECO:0000250" key="3">
    <source>
        <dbReference type="UniProtKB" id="Q9Y320"/>
    </source>
</evidence>
<evidence type="ECO:0000255" key="4"/>
<evidence type="ECO:0000255" key="5">
    <source>
        <dbReference type="PROSITE-ProRule" id="PRU00498"/>
    </source>
</evidence>
<evidence type="ECO:0000255" key="6">
    <source>
        <dbReference type="PROSITE-ProRule" id="PRU00691"/>
    </source>
</evidence>
<evidence type="ECO:0000256" key="7">
    <source>
        <dbReference type="SAM" id="MobiDB-lite"/>
    </source>
</evidence>
<evidence type="ECO:0000269" key="8">
    <source>
    </source>
</evidence>
<evidence type="ECO:0000303" key="9">
    <source ref="2"/>
</evidence>
<evidence type="ECO:0000305" key="10"/>